<sequence length="296" mass="31615">MTAQVLDGKATAGQIKEELAQRVARLRERDVVPGLGTVLVGDDPGSRSYVAGKHRDCEQVGLASIRRELPADASQEELERVIDELNEDPRCTGYIVQLPLPEYMDTNSVLERIDPAKDADGLHPTNLGRLVLNVSEPMTSPLPCTPHGIVELLTRHGVELAGREVLVIGRGVTVGRPMGLLLTRREINATVTLAHTGTRNLPELLGRADVVVAAAGRPHMVTAEQVKPGAVLLDVGVSRVPDPETGKGRLTGDIDPAAAEVASWMSPNPGGVGPMTRAMLLVNVVESCERQVFGQP</sequence>
<protein>
    <recommendedName>
        <fullName evidence="1">Bifunctional protein FolD</fullName>
    </recommendedName>
    <domain>
        <recommendedName>
            <fullName evidence="1">Methylenetetrahydrofolate dehydrogenase</fullName>
            <ecNumber evidence="1">1.5.1.5</ecNumber>
        </recommendedName>
    </domain>
    <domain>
        <recommendedName>
            <fullName evidence="1">Methenyltetrahydrofolate cyclohydrolase</fullName>
            <ecNumber evidence="1">3.5.4.9</ecNumber>
        </recommendedName>
    </domain>
</protein>
<keyword id="KW-0028">Amino-acid biosynthesis</keyword>
<keyword id="KW-0368">Histidine biosynthesis</keyword>
<keyword id="KW-0378">Hydrolase</keyword>
<keyword id="KW-0486">Methionine biosynthesis</keyword>
<keyword id="KW-0511">Multifunctional enzyme</keyword>
<keyword id="KW-0521">NADP</keyword>
<keyword id="KW-0554">One-carbon metabolism</keyword>
<keyword id="KW-0560">Oxidoreductase</keyword>
<keyword id="KW-0658">Purine biosynthesis</keyword>
<keyword id="KW-1185">Reference proteome</keyword>
<gene>
    <name evidence="1" type="primary">folD</name>
    <name type="ordered locus">KRH_17990</name>
</gene>
<dbReference type="EC" id="1.5.1.5" evidence="1"/>
<dbReference type="EC" id="3.5.4.9" evidence="1"/>
<dbReference type="EMBL" id="AP009152">
    <property type="protein sequence ID" value="BAG30146.1"/>
    <property type="molecule type" value="Genomic_DNA"/>
</dbReference>
<dbReference type="RefSeq" id="WP_012398867.1">
    <property type="nucleotide sequence ID" value="NC_010617.1"/>
</dbReference>
<dbReference type="SMR" id="B2GM30"/>
<dbReference type="STRING" id="378753.KRH_17990"/>
<dbReference type="KEGG" id="krh:KRH_17990"/>
<dbReference type="eggNOG" id="COG0190">
    <property type="taxonomic scope" value="Bacteria"/>
</dbReference>
<dbReference type="HOGENOM" id="CLU_034045_3_0_11"/>
<dbReference type="OrthoDB" id="9803580at2"/>
<dbReference type="UniPathway" id="UPA00193"/>
<dbReference type="Proteomes" id="UP000008838">
    <property type="component" value="Chromosome"/>
</dbReference>
<dbReference type="GO" id="GO:0005829">
    <property type="term" value="C:cytosol"/>
    <property type="evidence" value="ECO:0007669"/>
    <property type="project" value="TreeGrafter"/>
</dbReference>
<dbReference type="GO" id="GO:0004477">
    <property type="term" value="F:methenyltetrahydrofolate cyclohydrolase activity"/>
    <property type="evidence" value="ECO:0007669"/>
    <property type="project" value="UniProtKB-UniRule"/>
</dbReference>
<dbReference type="GO" id="GO:0004488">
    <property type="term" value="F:methylenetetrahydrofolate dehydrogenase (NADP+) activity"/>
    <property type="evidence" value="ECO:0007669"/>
    <property type="project" value="UniProtKB-UniRule"/>
</dbReference>
<dbReference type="GO" id="GO:0000105">
    <property type="term" value="P:L-histidine biosynthetic process"/>
    <property type="evidence" value="ECO:0007669"/>
    <property type="project" value="UniProtKB-KW"/>
</dbReference>
<dbReference type="GO" id="GO:0009086">
    <property type="term" value="P:methionine biosynthetic process"/>
    <property type="evidence" value="ECO:0007669"/>
    <property type="project" value="UniProtKB-KW"/>
</dbReference>
<dbReference type="GO" id="GO:0006164">
    <property type="term" value="P:purine nucleotide biosynthetic process"/>
    <property type="evidence" value="ECO:0007669"/>
    <property type="project" value="UniProtKB-KW"/>
</dbReference>
<dbReference type="GO" id="GO:0035999">
    <property type="term" value="P:tetrahydrofolate interconversion"/>
    <property type="evidence" value="ECO:0007669"/>
    <property type="project" value="UniProtKB-UniRule"/>
</dbReference>
<dbReference type="CDD" id="cd01080">
    <property type="entry name" value="NAD_bind_m-THF_DH_Cyclohyd"/>
    <property type="match status" value="1"/>
</dbReference>
<dbReference type="FunFam" id="3.40.50.10860:FF:000005">
    <property type="entry name" value="C-1-tetrahydrofolate synthase, cytoplasmic, putative"/>
    <property type="match status" value="1"/>
</dbReference>
<dbReference type="Gene3D" id="3.40.50.10860">
    <property type="entry name" value="Leucine Dehydrogenase, chain A, domain 1"/>
    <property type="match status" value="1"/>
</dbReference>
<dbReference type="Gene3D" id="3.40.50.720">
    <property type="entry name" value="NAD(P)-binding Rossmann-like Domain"/>
    <property type="match status" value="1"/>
</dbReference>
<dbReference type="HAMAP" id="MF_01576">
    <property type="entry name" value="THF_DHG_CYH"/>
    <property type="match status" value="1"/>
</dbReference>
<dbReference type="InterPro" id="IPR046346">
    <property type="entry name" value="Aminoacid_DH-like_N_sf"/>
</dbReference>
<dbReference type="InterPro" id="IPR036291">
    <property type="entry name" value="NAD(P)-bd_dom_sf"/>
</dbReference>
<dbReference type="InterPro" id="IPR000672">
    <property type="entry name" value="THF_DH/CycHdrlase"/>
</dbReference>
<dbReference type="InterPro" id="IPR020630">
    <property type="entry name" value="THF_DH/CycHdrlase_cat_dom"/>
</dbReference>
<dbReference type="InterPro" id="IPR020631">
    <property type="entry name" value="THF_DH/CycHdrlase_NAD-bd_dom"/>
</dbReference>
<dbReference type="NCBIfam" id="NF010789">
    <property type="entry name" value="PRK14193.1"/>
    <property type="match status" value="1"/>
</dbReference>
<dbReference type="PANTHER" id="PTHR48099:SF5">
    <property type="entry name" value="C-1-TETRAHYDROFOLATE SYNTHASE, CYTOPLASMIC"/>
    <property type="match status" value="1"/>
</dbReference>
<dbReference type="PANTHER" id="PTHR48099">
    <property type="entry name" value="C-1-TETRAHYDROFOLATE SYNTHASE, CYTOPLASMIC-RELATED"/>
    <property type="match status" value="1"/>
</dbReference>
<dbReference type="Pfam" id="PF00763">
    <property type="entry name" value="THF_DHG_CYH"/>
    <property type="match status" value="1"/>
</dbReference>
<dbReference type="Pfam" id="PF02882">
    <property type="entry name" value="THF_DHG_CYH_C"/>
    <property type="match status" value="1"/>
</dbReference>
<dbReference type="PRINTS" id="PR00085">
    <property type="entry name" value="THFDHDRGNASE"/>
</dbReference>
<dbReference type="SUPFAM" id="SSF53223">
    <property type="entry name" value="Aminoacid dehydrogenase-like, N-terminal domain"/>
    <property type="match status" value="1"/>
</dbReference>
<dbReference type="SUPFAM" id="SSF51735">
    <property type="entry name" value="NAD(P)-binding Rossmann-fold domains"/>
    <property type="match status" value="1"/>
</dbReference>
<evidence type="ECO:0000255" key="1">
    <source>
        <dbReference type="HAMAP-Rule" id="MF_01576"/>
    </source>
</evidence>
<organism>
    <name type="scientific">Kocuria rhizophila (strain ATCC 9341 / DSM 348 / NBRC 103217 / DC2201)</name>
    <dbReference type="NCBI Taxonomy" id="378753"/>
    <lineage>
        <taxon>Bacteria</taxon>
        <taxon>Bacillati</taxon>
        <taxon>Actinomycetota</taxon>
        <taxon>Actinomycetes</taxon>
        <taxon>Micrococcales</taxon>
        <taxon>Micrococcaceae</taxon>
        <taxon>Kocuria</taxon>
    </lineage>
</organism>
<reference key="1">
    <citation type="journal article" date="2008" name="J. Bacteriol.">
        <title>Complete genome sequence of the soil actinomycete Kocuria rhizophila.</title>
        <authorList>
            <person name="Takarada H."/>
            <person name="Sekine M."/>
            <person name="Kosugi H."/>
            <person name="Matsuo Y."/>
            <person name="Fujisawa T."/>
            <person name="Omata S."/>
            <person name="Kishi E."/>
            <person name="Shimizu A."/>
            <person name="Tsukatani N."/>
            <person name="Tanikawa S."/>
            <person name="Fujita N."/>
            <person name="Harayama S."/>
        </authorList>
    </citation>
    <scope>NUCLEOTIDE SEQUENCE [LARGE SCALE GENOMIC DNA]</scope>
    <source>
        <strain>ATCC 9341 / DSM 348 / NBRC 103217 / DC2201</strain>
    </source>
</reference>
<accession>B2GM30</accession>
<comment type="function">
    <text evidence="1">Catalyzes the oxidation of 5,10-methylenetetrahydrofolate to 5,10-methenyltetrahydrofolate and then the hydrolysis of 5,10-methenyltetrahydrofolate to 10-formyltetrahydrofolate.</text>
</comment>
<comment type="catalytic activity">
    <reaction evidence="1">
        <text>(6R)-5,10-methylene-5,6,7,8-tetrahydrofolate + NADP(+) = (6R)-5,10-methenyltetrahydrofolate + NADPH</text>
        <dbReference type="Rhea" id="RHEA:22812"/>
        <dbReference type="ChEBI" id="CHEBI:15636"/>
        <dbReference type="ChEBI" id="CHEBI:57455"/>
        <dbReference type="ChEBI" id="CHEBI:57783"/>
        <dbReference type="ChEBI" id="CHEBI:58349"/>
        <dbReference type="EC" id="1.5.1.5"/>
    </reaction>
</comment>
<comment type="catalytic activity">
    <reaction evidence="1">
        <text>(6R)-5,10-methenyltetrahydrofolate + H2O = (6R)-10-formyltetrahydrofolate + H(+)</text>
        <dbReference type="Rhea" id="RHEA:23700"/>
        <dbReference type="ChEBI" id="CHEBI:15377"/>
        <dbReference type="ChEBI" id="CHEBI:15378"/>
        <dbReference type="ChEBI" id="CHEBI:57455"/>
        <dbReference type="ChEBI" id="CHEBI:195366"/>
        <dbReference type="EC" id="3.5.4.9"/>
    </reaction>
</comment>
<comment type="pathway">
    <text evidence="1">One-carbon metabolism; tetrahydrofolate interconversion.</text>
</comment>
<comment type="subunit">
    <text evidence="1">Homodimer.</text>
</comment>
<comment type="similarity">
    <text evidence="1">Belongs to the tetrahydrofolate dehydrogenase/cyclohydrolase family.</text>
</comment>
<name>FOLD_KOCRD</name>
<feature type="chain" id="PRO_1000196785" description="Bifunctional protein FolD">
    <location>
        <begin position="1"/>
        <end position="296"/>
    </location>
</feature>
<feature type="binding site" evidence="1">
    <location>
        <begin position="169"/>
        <end position="171"/>
    </location>
    <ligand>
        <name>NADP(+)</name>
        <dbReference type="ChEBI" id="CHEBI:58349"/>
    </ligand>
</feature>
<feature type="binding site" evidence="1">
    <location>
        <position position="196"/>
    </location>
    <ligand>
        <name>NADP(+)</name>
        <dbReference type="ChEBI" id="CHEBI:58349"/>
    </ligand>
</feature>
<feature type="binding site" evidence="1">
    <location>
        <position position="237"/>
    </location>
    <ligand>
        <name>NADP(+)</name>
        <dbReference type="ChEBI" id="CHEBI:58349"/>
    </ligand>
</feature>
<proteinExistence type="inferred from homology"/>